<protein>
    <recommendedName>
        <fullName evidence="1">Serine hydroxymethyltransferase</fullName>
        <shortName evidence="1">SHMT</shortName>
        <shortName evidence="1">Serine methylase</shortName>
        <ecNumber evidence="1">2.1.2.1</ecNumber>
    </recommendedName>
</protein>
<sequence length="429" mass="46219">MDMQTGSRFFTDRLADSDPDLFQAIRSELTRQQDQIELIASENIVSQAVLEAQGSVLTNKYAEGYAGRRYYGGCEYVDIAETLAIERAKALFGCAYANVQPHSGAQANQAVFMALLQPGDTFMGMDLAAGGHLTHGAPANQSGKWFKVVSYGVRRDDHLIDYEEVEAKAREHRPKLIIAGGSAYPRQIDFARFRRIADEIGAYLMVDMAHYAGLVAAGVYPSPLPHAHVVTTTTHKTLRGPRGGMILSNDPELGKKFNSAVFPGLQGGPLMHVIAAKAVAFGEALRPEFKAYAQAVVDNARVLADRLVAGGLDIVSGGTDSHIVLVDLRPKRLTGKAAEATLEHAGMTCNKNGVPFDPEKPLVTSGVRLGSPAATTRGFGTAEFAQVGDLIVEVLDGLARSNGDNTATETRVREQVRALCHRFPIYPAL</sequence>
<accession>B6IMT0</accession>
<name>GLYA_RHOCS</name>
<reference key="1">
    <citation type="submission" date="2007-03" db="EMBL/GenBank/DDBJ databases">
        <title>Genome sequence of Rhodospirillum centenum.</title>
        <authorList>
            <person name="Touchman J.W."/>
            <person name="Bauer C."/>
            <person name="Blankenship R.E."/>
        </authorList>
    </citation>
    <scope>NUCLEOTIDE SEQUENCE [LARGE SCALE GENOMIC DNA]</scope>
    <source>
        <strain>ATCC 51521 / SW</strain>
    </source>
</reference>
<feature type="chain" id="PRO_1000091572" description="Serine hydroxymethyltransferase">
    <location>
        <begin position="1"/>
        <end position="429"/>
    </location>
</feature>
<feature type="binding site" evidence="1">
    <location>
        <position position="127"/>
    </location>
    <ligand>
        <name>(6S)-5,6,7,8-tetrahydrofolate</name>
        <dbReference type="ChEBI" id="CHEBI:57453"/>
    </ligand>
</feature>
<feature type="binding site" evidence="1">
    <location>
        <begin position="131"/>
        <end position="133"/>
    </location>
    <ligand>
        <name>(6S)-5,6,7,8-tetrahydrofolate</name>
        <dbReference type="ChEBI" id="CHEBI:57453"/>
    </ligand>
</feature>
<feature type="binding site" evidence="1">
    <location>
        <position position="252"/>
    </location>
    <ligand>
        <name>(6S)-5,6,7,8-tetrahydrofolate</name>
        <dbReference type="ChEBI" id="CHEBI:57453"/>
    </ligand>
</feature>
<feature type="site" description="Plays an important role in substrate specificity" evidence="1">
    <location>
        <position position="235"/>
    </location>
</feature>
<feature type="modified residue" description="N6-(pyridoxal phosphate)lysine" evidence="1">
    <location>
        <position position="236"/>
    </location>
</feature>
<comment type="function">
    <text evidence="1">Catalyzes the reversible interconversion of serine and glycine with tetrahydrofolate (THF) serving as the one-carbon carrier. This reaction serves as the major source of one-carbon groups required for the biosynthesis of purines, thymidylate, methionine, and other important biomolecules. Also exhibits THF-independent aldolase activity toward beta-hydroxyamino acids, producing glycine and aldehydes, via a retro-aldol mechanism.</text>
</comment>
<comment type="catalytic activity">
    <reaction evidence="1">
        <text>(6R)-5,10-methylene-5,6,7,8-tetrahydrofolate + glycine + H2O = (6S)-5,6,7,8-tetrahydrofolate + L-serine</text>
        <dbReference type="Rhea" id="RHEA:15481"/>
        <dbReference type="ChEBI" id="CHEBI:15377"/>
        <dbReference type="ChEBI" id="CHEBI:15636"/>
        <dbReference type="ChEBI" id="CHEBI:33384"/>
        <dbReference type="ChEBI" id="CHEBI:57305"/>
        <dbReference type="ChEBI" id="CHEBI:57453"/>
        <dbReference type="EC" id="2.1.2.1"/>
    </reaction>
</comment>
<comment type="cofactor">
    <cofactor evidence="1">
        <name>pyridoxal 5'-phosphate</name>
        <dbReference type="ChEBI" id="CHEBI:597326"/>
    </cofactor>
</comment>
<comment type="pathway">
    <text evidence="1">One-carbon metabolism; tetrahydrofolate interconversion.</text>
</comment>
<comment type="pathway">
    <text evidence="1">Amino-acid biosynthesis; glycine biosynthesis; glycine from L-serine: step 1/1.</text>
</comment>
<comment type="subunit">
    <text evidence="1">Homodimer.</text>
</comment>
<comment type="subcellular location">
    <subcellularLocation>
        <location evidence="1">Cytoplasm</location>
    </subcellularLocation>
</comment>
<comment type="similarity">
    <text evidence="1">Belongs to the SHMT family.</text>
</comment>
<keyword id="KW-0028">Amino-acid biosynthesis</keyword>
<keyword id="KW-0963">Cytoplasm</keyword>
<keyword id="KW-0554">One-carbon metabolism</keyword>
<keyword id="KW-0663">Pyridoxal phosphate</keyword>
<keyword id="KW-1185">Reference proteome</keyword>
<keyword id="KW-0808">Transferase</keyword>
<organism>
    <name type="scientific">Rhodospirillum centenum (strain ATCC 51521 / SW)</name>
    <dbReference type="NCBI Taxonomy" id="414684"/>
    <lineage>
        <taxon>Bacteria</taxon>
        <taxon>Pseudomonadati</taxon>
        <taxon>Pseudomonadota</taxon>
        <taxon>Alphaproteobacteria</taxon>
        <taxon>Rhodospirillales</taxon>
        <taxon>Rhodospirillaceae</taxon>
        <taxon>Rhodospirillum</taxon>
    </lineage>
</organism>
<gene>
    <name evidence="1" type="primary">glyA</name>
    <name type="ordered locus">RC1_1342</name>
</gene>
<evidence type="ECO:0000255" key="1">
    <source>
        <dbReference type="HAMAP-Rule" id="MF_00051"/>
    </source>
</evidence>
<proteinExistence type="inferred from homology"/>
<dbReference type="EC" id="2.1.2.1" evidence="1"/>
<dbReference type="EMBL" id="CP000613">
    <property type="protein sequence ID" value="ACI98746.1"/>
    <property type="molecule type" value="Genomic_DNA"/>
</dbReference>
<dbReference type="RefSeq" id="WP_012566533.1">
    <property type="nucleotide sequence ID" value="NC_011420.2"/>
</dbReference>
<dbReference type="SMR" id="B6IMT0"/>
<dbReference type="STRING" id="414684.RC1_1342"/>
<dbReference type="KEGG" id="rce:RC1_1342"/>
<dbReference type="eggNOG" id="COG0112">
    <property type="taxonomic scope" value="Bacteria"/>
</dbReference>
<dbReference type="HOGENOM" id="CLU_022477_2_1_5"/>
<dbReference type="OrthoDB" id="9803846at2"/>
<dbReference type="UniPathway" id="UPA00193"/>
<dbReference type="UniPathway" id="UPA00288">
    <property type="reaction ID" value="UER01023"/>
</dbReference>
<dbReference type="Proteomes" id="UP000001591">
    <property type="component" value="Chromosome"/>
</dbReference>
<dbReference type="GO" id="GO:0005829">
    <property type="term" value="C:cytosol"/>
    <property type="evidence" value="ECO:0007669"/>
    <property type="project" value="TreeGrafter"/>
</dbReference>
<dbReference type="GO" id="GO:0004372">
    <property type="term" value="F:glycine hydroxymethyltransferase activity"/>
    <property type="evidence" value="ECO:0007669"/>
    <property type="project" value="UniProtKB-UniRule"/>
</dbReference>
<dbReference type="GO" id="GO:0030170">
    <property type="term" value="F:pyridoxal phosphate binding"/>
    <property type="evidence" value="ECO:0007669"/>
    <property type="project" value="UniProtKB-UniRule"/>
</dbReference>
<dbReference type="GO" id="GO:0019264">
    <property type="term" value="P:glycine biosynthetic process from serine"/>
    <property type="evidence" value="ECO:0007669"/>
    <property type="project" value="UniProtKB-UniRule"/>
</dbReference>
<dbReference type="GO" id="GO:0035999">
    <property type="term" value="P:tetrahydrofolate interconversion"/>
    <property type="evidence" value="ECO:0007669"/>
    <property type="project" value="UniProtKB-UniRule"/>
</dbReference>
<dbReference type="CDD" id="cd00378">
    <property type="entry name" value="SHMT"/>
    <property type="match status" value="1"/>
</dbReference>
<dbReference type="FunFam" id="3.40.640.10:FF:000001">
    <property type="entry name" value="Serine hydroxymethyltransferase"/>
    <property type="match status" value="1"/>
</dbReference>
<dbReference type="Gene3D" id="3.90.1150.10">
    <property type="entry name" value="Aspartate Aminotransferase, domain 1"/>
    <property type="match status" value="1"/>
</dbReference>
<dbReference type="Gene3D" id="3.40.640.10">
    <property type="entry name" value="Type I PLP-dependent aspartate aminotransferase-like (Major domain)"/>
    <property type="match status" value="1"/>
</dbReference>
<dbReference type="HAMAP" id="MF_00051">
    <property type="entry name" value="SHMT"/>
    <property type="match status" value="1"/>
</dbReference>
<dbReference type="InterPro" id="IPR015424">
    <property type="entry name" value="PyrdxlP-dep_Trfase"/>
</dbReference>
<dbReference type="InterPro" id="IPR015421">
    <property type="entry name" value="PyrdxlP-dep_Trfase_major"/>
</dbReference>
<dbReference type="InterPro" id="IPR015422">
    <property type="entry name" value="PyrdxlP-dep_Trfase_small"/>
</dbReference>
<dbReference type="InterPro" id="IPR001085">
    <property type="entry name" value="Ser_HO-MeTrfase"/>
</dbReference>
<dbReference type="InterPro" id="IPR049943">
    <property type="entry name" value="Ser_HO-MeTrfase-like"/>
</dbReference>
<dbReference type="InterPro" id="IPR019798">
    <property type="entry name" value="Ser_HO-MeTrfase_PLP_BS"/>
</dbReference>
<dbReference type="InterPro" id="IPR039429">
    <property type="entry name" value="SHMT-like_dom"/>
</dbReference>
<dbReference type="NCBIfam" id="NF000586">
    <property type="entry name" value="PRK00011.1"/>
    <property type="match status" value="1"/>
</dbReference>
<dbReference type="PANTHER" id="PTHR11680">
    <property type="entry name" value="SERINE HYDROXYMETHYLTRANSFERASE"/>
    <property type="match status" value="1"/>
</dbReference>
<dbReference type="PANTHER" id="PTHR11680:SF35">
    <property type="entry name" value="SERINE HYDROXYMETHYLTRANSFERASE 1"/>
    <property type="match status" value="1"/>
</dbReference>
<dbReference type="Pfam" id="PF00464">
    <property type="entry name" value="SHMT"/>
    <property type="match status" value="1"/>
</dbReference>
<dbReference type="PIRSF" id="PIRSF000412">
    <property type="entry name" value="SHMT"/>
    <property type="match status" value="1"/>
</dbReference>
<dbReference type="SUPFAM" id="SSF53383">
    <property type="entry name" value="PLP-dependent transferases"/>
    <property type="match status" value="1"/>
</dbReference>
<dbReference type="PROSITE" id="PS00096">
    <property type="entry name" value="SHMT"/>
    <property type="match status" value="1"/>
</dbReference>